<sequence length="227" mass="24736">MKPPIIIINFKAYENSFGDKAVNLGKKIEKISKEYSVEIILSTPATMIYRMSQEVDLPIYAEHVDPVPLGAFTGAILPEMVKDAGAKGTLINHSERRLRADEIDDVLKRTKKLGLKSILCVDRYELVYPFSLLKPDAILIEPPELIGTGVSVSKAKPEVITRAVDEIRKSEGIYLIAGAGITTGEDVYKALKLGAHGIGVASAVMKAKEPEKVVEDFITSALRAISS</sequence>
<comment type="function">
    <text evidence="1">Involved in the gluconeogenesis. Catalyzes stereospecifically the conversion of dihydroxyacetone phosphate (DHAP) to D-glyceraldehyde-3-phosphate (G3P).</text>
</comment>
<comment type="catalytic activity">
    <reaction evidence="1">
        <text>D-glyceraldehyde 3-phosphate = dihydroxyacetone phosphate</text>
        <dbReference type="Rhea" id="RHEA:18585"/>
        <dbReference type="ChEBI" id="CHEBI:57642"/>
        <dbReference type="ChEBI" id="CHEBI:59776"/>
        <dbReference type="EC" id="5.3.1.1"/>
    </reaction>
</comment>
<comment type="pathway">
    <text evidence="1">Carbohydrate biosynthesis; gluconeogenesis.</text>
</comment>
<comment type="pathway">
    <text evidence="1">Carbohydrate degradation; glycolysis; D-glyceraldehyde 3-phosphate from glycerone phosphate: step 1/1.</text>
</comment>
<comment type="subunit">
    <text evidence="1">Homotetramer; dimer of dimers.</text>
</comment>
<comment type="subcellular location">
    <subcellularLocation>
        <location evidence="1">Cytoplasm</location>
    </subcellularLocation>
</comment>
<comment type="similarity">
    <text evidence="1">Belongs to the triosephosphate isomerase family.</text>
</comment>
<name>TPIS_SACS2</name>
<protein>
    <recommendedName>
        <fullName evidence="1">Triosephosphate isomerase</fullName>
        <shortName evidence="1">TIM</shortName>
        <shortName evidence="1">TPI</shortName>
        <ecNumber evidence="1">5.3.1.1</ecNumber>
    </recommendedName>
    <alternativeName>
        <fullName evidence="1">Triose-phosphate isomerase</fullName>
    </alternativeName>
</protein>
<proteinExistence type="inferred from homology"/>
<evidence type="ECO:0000255" key="1">
    <source>
        <dbReference type="HAMAP-Rule" id="MF_00147"/>
    </source>
</evidence>
<feature type="chain" id="PRO_0000090346" description="Triosephosphate isomerase">
    <location>
        <begin position="1"/>
        <end position="227"/>
    </location>
</feature>
<feature type="active site" description="Electrophile" evidence="1">
    <location>
        <position position="93"/>
    </location>
</feature>
<feature type="active site" description="Proton acceptor" evidence="1">
    <location>
        <position position="141"/>
    </location>
</feature>
<feature type="binding site" evidence="1">
    <location>
        <begin position="9"/>
        <end position="11"/>
    </location>
    <ligand>
        <name>substrate</name>
    </ligand>
</feature>
<feature type="binding site" evidence="1">
    <location>
        <position position="146"/>
    </location>
    <ligand>
        <name>substrate</name>
    </ligand>
</feature>
<feature type="binding site" evidence="1">
    <location>
        <position position="180"/>
    </location>
    <ligand>
        <name>substrate</name>
    </ligand>
</feature>
<feature type="binding site" evidence="1">
    <location>
        <begin position="201"/>
        <end position="202"/>
    </location>
    <ligand>
        <name>substrate</name>
    </ligand>
</feature>
<keyword id="KW-0963">Cytoplasm</keyword>
<keyword id="KW-0312">Gluconeogenesis</keyword>
<keyword id="KW-0324">Glycolysis</keyword>
<keyword id="KW-0413">Isomerase</keyword>
<keyword id="KW-1185">Reference proteome</keyword>
<accession>Q97VM8</accession>
<reference key="1">
    <citation type="journal article" date="2001" name="Proc. Natl. Acad. Sci. U.S.A.">
        <title>The complete genome of the crenarchaeon Sulfolobus solfataricus P2.</title>
        <authorList>
            <person name="She Q."/>
            <person name="Singh R.K."/>
            <person name="Confalonieri F."/>
            <person name="Zivanovic Y."/>
            <person name="Allard G."/>
            <person name="Awayez M.J."/>
            <person name="Chan-Weiher C.C.-Y."/>
            <person name="Clausen I.G."/>
            <person name="Curtis B.A."/>
            <person name="De Moors A."/>
            <person name="Erauso G."/>
            <person name="Fletcher C."/>
            <person name="Gordon P.M.K."/>
            <person name="Heikamp-de Jong I."/>
            <person name="Jeffries A.C."/>
            <person name="Kozera C.J."/>
            <person name="Medina N."/>
            <person name="Peng X."/>
            <person name="Thi-Ngoc H.P."/>
            <person name="Redder P."/>
            <person name="Schenk M.E."/>
            <person name="Theriault C."/>
            <person name="Tolstrup N."/>
            <person name="Charlebois R.L."/>
            <person name="Doolittle W.F."/>
            <person name="Duguet M."/>
            <person name="Gaasterland T."/>
            <person name="Garrett R.A."/>
            <person name="Ragan M.A."/>
            <person name="Sensen C.W."/>
            <person name="Van der Oost J."/>
        </authorList>
    </citation>
    <scope>NUCLEOTIDE SEQUENCE [LARGE SCALE GENOMIC DNA]</scope>
    <source>
        <strain>ATCC 35092 / DSM 1617 / JCM 11322 / P2</strain>
    </source>
</reference>
<dbReference type="EC" id="5.3.1.1" evidence="1"/>
<dbReference type="EMBL" id="AE006641">
    <property type="protein sequence ID" value="AAK42716.1"/>
    <property type="molecule type" value="Genomic_DNA"/>
</dbReference>
<dbReference type="PIR" id="E90432">
    <property type="entry name" value="E90432"/>
</dbReference>
<dbReference type="RefSeq" id="WP_009989304.1">
    <property type="nucleotide sequence ID" value="NC_002754.1"/>
</dbReference>
<dbReference type="SMR" id="Q97VM8"/>
<dbReference type="FunCoup" id="Q97VM8">
    <property type="interactions" value="271"/>
</dbReference>
<dbReference type="STRING" id="273057.SSO2592"/>
<dbReference type="PaxDb" id="273057-SSO2592"/>
<dbReference type="EnsemblBacteria" id="AAK42716">
    <property type="protein sequence ID" value="AAK42716"/>
    <property type="gene ID" value="SSO2592"/>
</dbReference>
<dbReference type="GeneID" id="44128322"/>
<dbReference type="KEGG" id="sso:SSO2592"/>
<dbReference type="PATRIC" id="fig|273057.12.peg.2673"/>
<dbReference type="eggNOG" id="arCOG01087">
    <property type="taxonomic scope" value="Archaea"/>
</dbReference>
<dbReference type="HOGENOM" id="CLU_104921_0_0_2"/>
<dbReference type="InParanoid" id="Q97VM8"/>
<dbReference type="PhylomeDB" id="Q97VM8"/>
<dbReference type="BRENDA" id="5.3.1.1">
    <property type="organism ID" value="6163"/>
</dbReference>
<dbReference type="SABIO-RK" id="Q97VM8"/>
<dbReference type="UniPathway" id="UPA00109">
    <property type="reaction ID" value="UER00189"/>
</dbReference>
<dbReference type="UniPathway" id="UPA00138"/>
<dbReference type="Proteomes" id="UP000001974">
    <property type="component" value="Chromosome"/>
</dbReference>
<dbReference type="GO" id="GO:0005829">
    <property type="term" value="C:cytosol"/>
    <property type="evidence" value="ECO:0000318"/>
    <property type="project" value="GO_Central"/>
</dbReference>
<dbReference type="GO" id="GO:0004807">
    <property type="term" value="F:triose-phosphate isomerase activity"/>
    <property type="evidence" value="ECO:0000318"/>
    <property type="project" value="GO_Central"/>
</dbReference>
<dbReference type="GO" id="GO:0006094">
    <property type="term" value="P:gluconeogenesis"/>
    <property type="evidence" value="ECO:0000318"/>
    <property type="project" value="GO_Central"/>
</dbReference>
<dbReference type="GO" id="GO:0046166">
    <property type="term" value="P:glyceraldehyde-3-phosphate biosynthetic process"/>
    <property type="evidence" value="ECO:0000318"/>
    <property type="project" value="GO_Central"/>
</dbReference>
<dbReference type="GO" id="GO:0019563">
    <property type="term" value="P:glycerol catabolic process"/>
    <property type="evidence" value="ECO:0000318"/>
    <property type="project" value="GO_Central"/>
</dbReference>
<dbReference type="GO" id="GO:0006096">
    <property type="term" value="P:glycolytic process"/>
    <property type="evidence" value="ECO:0000318"/>
    <property type="project" value="GO_Central"/>
</dbReference>
<dbReference type="CDD" id="cd00311">
    <property type="entry name" value="TIM"/>
    <property type="match status" value="1"/>
</dbReference>
<dbReference type="FunFam" id="3.20.20.70:FF:000223">
    <property type="entry name" value="Triosephosphate isomerase"/>
    <property type="match status" value="1"/>
</dbReference>
<dbReference type="Gene3D" id="3.20.20.70">
    <property type="entry name" value="Aldolase class I"/>
    <property type="match status" value="1"/>
</dbReference>
<dbReference type="HAMAP" id="MF_00147_A">
    <property type="entry name" value="TIM_A"/>
    <property type="match status" value="1"/>
</dbReference>
<dbReference type="InterPro" id="IPR013785">
    <property type="entry name" value="Aldolase_TIM"/>
</dbReference>
<dbReference type="InterPro" id="IPR035990">
    <property type="entry name" value="TIM_sf"/>
</dbReference>
<dbReference type="InterPro" id="IPR000652">
    <property type="entry name" value="Triosephosphate_isomerase"/>
</dbReference>
<dbReference type="InterPro" id="IPR022891">
    <property type="entry name" value="Triosephosphate_isomerase_arc"/>
</dbReference>
<dbReference type="NCBIfam" id="NF003302">
    <property type="entry name" value="PRK04302.1"/>
    <property type="match status" value="1"/>
</dbReference>
<dbReference type="NCBIfam" id="TIGR00419">
    <property type="entry name" value="tim"/>
    <property type="match status" value="1"/>
</dbReference>
<dbReference type="PANTHER" id="PTHR21139">
    <property type="entry name" value="TRIOSEPHOSPHATE ISOMERASE"/>
    <property type="match status" value="1"/>
</dbReference>
<dbReference type="PANTHER" id="PTHR21139:SF42">
    <property type="entry name" value="TRIOSEPHOSPHATE ISOMERASE"/>
    <property type="match status" value="1"/>
</dbReference>
<dbReference type="Pfam" id="PF00121">
    <property type="entry name" value="TIM"/>
    <property type="match status" value="1"/>
</dbReference>
<dbReference type="SUPFAM" id="SSF51351">
    <property type="entry name" value="Triosephosphate isomerase (TIM)"/>
    <property type="match status" value="1"/>
</dbReference>
<dbReference type="PROSITE" id="PS51440">
    <property type="entry name" value="TIM_2"/>
    <property type="match status" value="1"/>
</dbReference>
<gene>
    <name evidence="1" type="primary">tpiA</name>
    <name type="ordered locus">SSO2592</name>
</gene>
<organism>
    <name type="scientific">Saccharolobus solfataricus (strain ATCC 35092 / DSM 1617 / JCM 11322 / P2)</name>
    <name type="common">Sulfolobus solfataricus</name>
    <dbReference type="NCBI Taxonomy" id="273057"/>
    <lineage>
        <taxon>Archaea</taxon>
        <taxon>Thermoproteota</taxon>
        <taxon>Thermoprotei</taxon>
        <taxon>Sulfolobales</taxon>
        <taxon>Sulfolobaceae</taxon>
        <taxon>Saccharolobus</taxon>
    </lineage>
</organism>